<dbReference type="EMBL" id="CP000712">
    <property type="protein sequence ID" value="ABQ80696.1"/>
    <property type="molecule type" value="Genomic_DNA"/>
</dbReference>
<dbReference type="SMR" id="A5W986"/>
<dbReference type="KEGG" id="ppf:Pput_4576"/>
<dbReference type="eggNOG" id="COG0858">
    <property type="taxonomic scope" value="Bacteria"/>
</dbReference>
<dbReference type="HOGENOM" id="CLU_089475_5_0_6"/>
<dbReference type="GO" id="GO:0005829">
    <property type="term" value="C:cytosol"/>
    <property type="evidence" value="ECO:0007669"/>
    <property type="project" value="TreeGrafter"/>
</dbReference>
<dbReference type="GO" id="GO:0043024">
    <property type="term" value="F:ribosomal small subunit binding"/>
    <property type="evidence" value="ECO:0007669"/>
    <property type="project" value="TreeGrafter"/>
</dbReference>
<dbReference type="GO" id="GO:0030490">
    <property type="term" value="P:maturation of SSU-rRNA"/>
    <property type="evidence" value="ECO:0007669"/>
    <property type="project" value="UniProtKB-UniRule"/>
</dbReference>
<dbReference type="Gene3D" id="3.30.300.20">
    <property type="match status" value="1"/>
</dbReference>
<dbReference type="HAMAP" id="MF_00003">
    <property type="entry name" value="RbfA"/>
    <property type="match status" value="1"/>
</dbReference>
<dbReference type="InterPro" id="IPR015946">
    <property type="entry name" value="KH_dom-like_a/b"/>
</dbReference>
<dbReference type="InterPro" id="IPR000238">
    <property type="entry name" value="RbfA"/>
</dbReference>
<dbReference type="InterPro" id="IPR023799">
    <property type="entry name" value="RbfA_dom_sf"/>
</dbReference>
<dbReference type="InterPro" id="IPR020053">
    <property type="entry name" value="Ribosome-bd_factorA_CS"/>
</dbReference>
<dbReference type="NCBIfam" id="TIGR00082">
    <property type="entry name" value="rbfA"/>
    <property type="match status" value="1"/>
</dbReference>
<dbReference type="PANTHER" id="PTHR33515">
    <property type="entry name" value="RIBOSOME-BINDING FACTOR A, CHLOROPLASTIC-RELATED"/>
    <property type="match status" value="1"/>
</dbReference>
<dbReference type="PANTHER" id="PTHR33515:SF1">
    <property type="entry name" value="RIBOSOME-BINDING FACTOR A, CHLOROPLASTIC-RELATED"/>
    <property type="match status" value="1"/>
</dbReference>
<dbReference type="Pfam" id="PF02033">
    <property type="entry name" value="RBFA"/>
    <property type="match status" value="1"/>
</dbReference>
<dbReference type="SUPFAM" id="SSF89919">
    <property type="entry name" value="Ribosome-binding factor A, RbfA"/>
    <property type="match status" value="1"/>
</dbReference>
<dbReference type="PROSITE" id="PS01319">
    <property type="entry name" value="RBFA"/>
    <property type="match status" value="1"/>
</dbReference>
<comment type="function">
    <text evidence="1">One of several proteins that assist in the late maturation steps of the functional core of the 30S ribosomal subunit. Associates with free 30S ribosomal subunits (but not with 30S subunits that are part of 70S ribosomes or polysomes). Required for efficient processing of 16S rRNA. May interact with the 5'-terminal helix region of 16S rRNA.</text>
</comment>
<comment type="subunit">
    <text evidence="1">Monomer. Binds 30S ribosomal subunits, but not 50S ribosomal subunits or 70S ribosomes.</text>
</comment>
<comment type="subcellular location">
    <subcellularLocation>
        <location evidence="1">Cytoplasm</location>
    </subcellularLocation>
</comment>
<comment type="similarity">
    <text evidence="1">Belongs to the RbfA family.</text>
</comment>
<organism>
    <name type="scientific">Pseudomonas putida (strain ATCC 700007 / DSM 6899 / JCM 31910 / BCRC 17059 / LMG 24140 / F1)</name>
    <dbReference type="NCBI Taxonomy" id="351746"/>
    <lineage>
        <taxon>Bacteria</taxon>
        <taxon>Pseudomonadati</taxon>
        <taxon>Pseudomonadota</taxon>
        <taxon>Gammaproteobacteria</taxon>
        <taxon>Pseudomonadales</taxon>
        <taxon>Pseudomonadaceae</taxon>
        <taxon>Pseudomonas</taxon>
    </lineage>
</organism>
<name>RBFA_PSEP1</name>
<protein>
    <recommendedName>
        <fullName evidence="1">Ribosome-binding factor A</fullName>
    </recommendedName>
</protein>
<keyword id="KW-0963">Cytoplasm</keyword>
<keyword id="KW-0690">Ribosome biogenesis</keyword>
<sequence>MAKEYSRTQRIGDQMQRELAELIRREVKDPRVGLVTITAVDVSRDLGHAKVFITVMGEETPDAVQQSLKALNSAASFLRLHLGRSMQLRSVPQLHFHFDESVSRGVHLSALIERAVAEDRLHKDADESDTKE</sequence>
<reference key="1">
    <citation type="submission" date="2007-05" db="EMBL/GenBank/DDBJ databases">
        <title>Complete sequence of Pseudomonas putida F1.</title>
        <authorList>
            <consortium name="US DOE Joint Genome Institute"/>
            <person name="Copeland A."/>
            <person name="Lucas S."/>
            <person name="Lapidus A."/>
            <person name="Barry K."/>
            <person name="Detter J.C."/>
            <person name="Glavina del Rio T."/>
            <person name="Hammon N."/>
            <person name="Israni S."/>
            <person name="Dalin E."/>
            <person name="Tice H."/>
            <person name="Pitluck S."/>
            <person name="Chain P."/>
            <person name="Malfatti S."/>
            <person name="Shin M."/>
            <person name="Vergez L."/>
            <person name="Schmutz J."/>
            <person name="Larimer F."/>
            <person name="Land M."/>
            <person name="Hauser L."/>
            <person name="Kyrpides N."/>
            <person name="Lykidis A."/>
            <person name="Parales R."/>
            <person name="Richardson P."/>
        </authorList>
    </citation>
    <scope>NUCLEOTIDE SEQUENCE [LARGE SCALE GENOMIC DNA]</scope>
    <source>
        <strain>ATCC 700007 / DSM 6899 / JCM 31910 / BCRC 17059 / LMG 24140 / F1</strain>
    </source>
</reference>
<feature type="chain" id="PRO_1000000178" description="Ribosome-binding factor A">
    <location>
        <begin position="1"/>
        <end position="132"/>
    </location>
</feature>
<gene>
    <name evidence="1" type="primary">rbfA</name>
    <name type="ordered locus">Pput_4576</name>
</gene>
<evidence type="ECO:0000255" key="1">
    <source>
        <dbReference type="HAMAP-Rule" id="MF_00003"/>
    </source>
</evidence>
<proteinExistence type="inferred from homology"/>
<accession>A5W986</accession>